<reference key="1">
    <citation type="journal article" date="2007" name="PLoS Genet.">
        <title>Patterns and implications of gene gain and loss in the evolution of Prochlorococcus.</title>
        <authorList>
            <person name="Kettler G.C."/>
            <person name="Martiny A.C."/>
            <person name="Huang K."/>
            <person name="Zucker J."/>
            <person name="Coleman M.L."/>
            <person name="Rodrigue S."/>
            <person name="Chen F."/>
            <person name="Lapidus A."/>
            <person name="Ferriera S."/>
            <person name="Johnson J."/>
            <person name="Steglich C."/>
            <person name="Church G.M."/>
            <person name="Richardson P."/>
            <person name="Chisholm S.W."/>
        </authorList>
    </citation>
    <scope>NUCLEOTIDE SEQUENCE [LARGE SCALE GENOMIC DNA]</scope>
    <source>
        <strain>MIT 9211</strain>
    </source>
</reference>
<name>ILVD_PROM4</name>
<gene>
    <name evidence="1" type="primary">ilvD</name>
    <name type="ordered locus">P9211_09881</name>
</gene>
<keyword id="KW-0001">2Fe-2S</keyword>
<keyword id="KW-0028">Amino-acid biosynthesis</keyword>
<keyword id="KW-0100">Branched-chain amino acid biosynthesis</keyword>
<keyword id="KW-0408">Iron</keyword>
<keyword id="KW-0411">Iron-sulfur</keyword>
<keyword id="KW-0456">Lyase</keyword>
<keyword id="KW-0460">Magnesium</keyword>
<keyword id="KW-0479">Metal-binding</keyword>
<keyword id="KW-1185">Reference proteome</keyword>
<dbReference type="EC" id="4.2.1.9" evidence="1"/>
<dbReference type="EMBL" id="CP000878">
    <property type="protein sequence ID" value="ABX08919.1"/>
    <property type="molecule type" value="Genomic_DNA"/>
</dbReference>
<dbReference type="RefSeq" id="WP_012195540.1">
    <property type="nucleotide sequence ID" value="NC_009976.1"/>
</dbReference>
<dbReference type="SMR" id="A9BAQ7"/>
<dbReference type="STRING" id="93059.P9211_09881"/>
<dbReference type="KEGG" id="pmj:P9211_09881"/>
<dbReference type="eggNOG" id="COG0129">
    <property type="taxonomic scope" value="Bacteria"/>
</dbReference>
<dbReference type="HOGENOM" id="CLU_014271_4_2_3"/>
<dbReference type="OrthoDB" id="9807077at2"/>
<dbReference type="UniPathway" id="UPA00047">
    <property type="reaction ID" value="UER00057"/>
</dbReference>
<dbReference type="UniPathway" id="UPA00049">
    <property type="reaction ID" value="UER00061"/>
</dbReference>
<dbReference type="Proteomes" id="UP000000788">
    <property type="component" value="Chromosome"/>
</dbReference>
<dbReference type="GO" id="GO:0051537">
    <property type="term" value="F:2 iron, 2 sulfur cluster binding"/>
    <property type="evidence" value="ECO:0007669"/>
    <property type="project" value="UniProtKB-UniRule"/>
</dbReference>
<dbReference type="GO" id="GO:0004160">
    <property type="term" value="F:dihydroxy-acid dehydratase activity"/>
    <property type="evidence" value="ECO:0007669"/>
    <property type="project" value="UniProtKB-UniRule"/>
</dbReference>
<dbReference type="GO" id="GO:0000287">
    <property type="term" value="F:magnesium ion binding"/>
    <property type="evidence" value="ECO:0007669"/>
    <property type="project" value="UniProtKB-UniRule"/>
</dbReference>
<dbReference type="GO" id="GO:0009097">
    <property type="term" value="P:isoleucine biosynthetic process"/>
    <property type="evidence" value="ECO:0007669"/>
    <property type="project" value="UniProtKB-UniRule"/>
</dbReference>
<dbReference type="GO" id="GO:0009099">
    <property type="term" value="P:L-valine biosynthetic process"/>
    <property type="evidence" value="ECO:0007669"/>
    <property type="project" value="UniProtKB-UniRule"/>
</dbReference>
<dbReference type="FunFam" id="3.50.30.80:FF:000001">
    <property type="entry name" value="Dihydroxy-acid dehydratase"/>
    <property type="match status" value="1"/>
</dbReference>
<dbReference type="Gene3D" id="3.50.30.80">
    <property type="entry name" value="IlvD/EDD C-terminal domain-like"/>
    <property type="match status" value="1"/>
</dbReference>
<dbReference type="HAMAP" id="MF_00012">
    <property type="entry name" value="IlvD"/>
    <property type="match status" value="1"/>
</dbReference>
<dbReference type="InterPro" id="IPR050165">
    <property type="entry name" value="DHAD_IlvD/Edd"/>
</dbReference>
<dbReference type="InterPro" id="IPR042096">
    <property type="entry name" value="Dihydro-acid_dehy_C"/>
</dbReference>
<dbReference type="InterPro" id="IPR004404">
    <property type="entry name" value="DihydroxyA_deHydtase"/>
</dbReference>
<dbReference type="InterPro" id="IPR020558">
    <property type="entry name" value="DiOHA_6PGluconate_deHydtase_CS"/>
</dbReference>
<dbReference type="InterPro" id="IPR056740">
    <property type="entry name" value="ILV_EDD_C"/>
</dbReference>
<dbReference type="InterPro" id="IPR000581">
    <property type="entry name" value="ILV_EDD_N"/>
</dbReference>
<dbReference type="InterPro" id="IPR037237">
    <property type="entry name" value="IlvD/EDD_N"/>
</dbReference>
<dbReference type="NCBIfam" id="TIGR00110">
    <property type="entry name" value="ilvD"/>
    <property type="match status" value="1"/>
</dbReference>
<dbReference type="NCBIfam" id="NF002068">
    <property type="entry name" value="PRK00911.1"/>
    <property type="match status" value="1"/>
</dbReference>
<dbReference type="PANTHER" id="PTHR21000">
    <property type="entry name" value="DIHYDROXY-ACID DEHYDRATASE DAD"/>
    <property type="match status" value="1"/>
</dbReference>
<dbReference type="PANTHER" id="PTHR21000:SF5">
    <property type="entry name" value="DIHYDROXY-ACID DEHYDRATASE, MITOCHONDRIAL"/>
    <property type="match status" value="1"/>
</dbReference>
<dbReference type="Pfam" id="PF24877">
    <property type="entry name" value="ILV_EDD_C"/>
    <property type="match status" value="1"/>
</dbReference>
<dbReference type="Pfam" id="PF00920">
    <property type="entry name" value="ILVD_EDD_N"/>
    <property type="match status" value="1"/>
</dbReference>
<dbReference type="SUPFAM" id="SSF143975">
    <property type="entry name" value="IlvD/EDD N-terminal domain-like"/>
    <property type="match status" value="1"/>
</dbReference>
<dbReference type="SUPFAM" id="SSF52016">
    <property type="entry name" value="LeuD/IlvD-like"/>
    <property type="match status" value="1"/>
</dbReference>
<dbReference type="PROSITE" id="PS00886">
    <property type="entry name" value="ILVD_EDD_1"/>
    <property type="match status" value="1"/>
</dbReference>
<dbReference type="PROSITE" id="PS00887">
    <property type="entry name" value="ILVD_EDD_2"/>
    <property type="match status" value="1"/>
</dbReference>
<protein>
    <recommendedName>
        <fullName evidence="1">Dihydroxy-acid dehydratase</fullName>
        <shortName evidence="1">DAD</shortName>
        <ecNumber evidence="1">4.2.1.9</ecNumber>
    </recommendedName>
</protein>
<accession>A9BAQ7</accession>
<sequence>MLRSSAITQGIQRSPNRAMLRAVGFNDNDFNKPIIGIANGYSTITPCNVGLNNLALHAEASTKVSGAMPQMFGTITVSDGISMGTEGMKYSLVSREVIADSIETACNAQSMDGVLAIGGCDKNMPGAMIAMARMNIPAIFVYGGTIKPGKLDGCDLTVVSAFEAVGQLTSGKITEDKLIAVEKNCIPGAGSCGGMFTANTMSAAIETLGLSLPYSSTMAAEDKEKIESAERSAKVLVDAIEKNIRPLDLLTKKSFENAIAVVMAVGGSTNAVLHLLAIARSSGVDLCIDDFERIRQKVPVICDLKPSGKYVTVDLHKAGGIPQVMKLLLDAGLLHGDCLTIEGITIDESLKNIPSEPPANQNVISPITKPIYKKGHLAILKGNLATEGCVAKISGIRTPVLKGPAKVFESEEDCLDAILKEQIQEGDVIVIRNEGPVGGPGMREMLAPTSAIVGQGLGDKVALITDGRFSGGTYGLVVGHIAPEASVGGNIALVKEGDMITVDAHKKLIQLEVDEKELSKRRTLWEKPEVKYKTGILGKYARLVSSSSKGAVTDQP</sequence>
<evidence type="ECO:0000255" key="1">
    <source>
        <dbReference type="HAMAP-Rule" id="MF_00012"/>
    </source>
</evidence>
<organism>
    <name type="scientific">Prochlorococcus marinus (strain MIT 9211)</name>
    <dbReference type="NCBI Taxonomy" id="93059"/>
    <lineage>
        <taxon>Bacteria</taxon>
        <taxon>Bacillati</taxon>
        <taxon>Cyanobacteriota</taxon>
        <taxon>Cyanophyceae</taxon>
        <taxon>Synechococcales</taxon>
        <taxon>Prochlorococcaceae</taxon>
        <taxon>Prochlorococcus</taxon>
    </lineage>
</organism>
<proteinExistence type="inferred from homology"/>
<feature type="chain" id="PRO_1000116276" description="Dihydroxy-acid dehydratase">
    <location>
        <begin position="1"/>
        <end position="556"/>
    </location>
</feature>
<feature type="active site" description="Proton acceptor" evidence="1">
    <location>
        <position position="470"/>
    </location>
</feature>
<feature type="binding site" evidence="1">
    <location>
        <position position="47"/>
    </location>
    <ligand>
        <name>[2Fe-2S] cluster</name>
        <dbReference type="ChEBI" id="CHEBI:190135"/>
    </ligand>
</feature>
<feature type="binding site" evidence="1">
    <location>
        <position position="79"/>
    </location>
    <ligand>
        <name>Mg(2+)</name>
        <dbReference type="ChEBI" id="CHEBI:18420"/>
    </ligand>
</feature>
<feature type="binding site" evidence="1">
    <location>
        <position position="120"/>
    </location>
    <ligand>
        <name>[2Fe-2S] cluster</name>
        <dbReference type="ChEBI" id="CHEBI:190135"/>
    </ligand>
</feature>
<feature type="binding site" evidence="1">
    <location>
        <position position="121"/>
    </location>
    <ligand>
        <name>Mg(2+)</name>
        <dbReference type="ChEBI" id="CHEBI:18420"/>
    </ligand>
</feature>
<feature type="binding site" description="via carbamate group" evidence="1">
    <location>
        <position position="122"/>
    </location>
    <ligand>
        <name>Mg(2+)</name>
        <dbReference type="ChEBI" id="CHEBI:18420"/>
    </ligand>
</feature>
<feature type="binding site" evidence="1">
    <location>
        <position position="192"/>
    </location>
    <ligand>
        <name>[2Fe-2S] cluster</name>
        <dbReference type="ChEBI" id="CHEBI:190135"/>
    </ligand>
</feature>
<feature type="binding site" evidence="1">
    <location>
        <position position="444"/>
    </location>
    <ligand>
        <name>Mg(2+)</name>
        <dbReference type="ChEBI" id="CHEBI:18420"/>
    </ligand>
</feature>
<feature type="modified residue" description="N6-carboxylysine" evidence="1">
    <location>
        <position position="122"/>
    </location>
</feature>
<comment type="function">
    <text evidence="1">Functions in the biosynthesis of branched-chain amino acids. Catalyzes the dehydration of (2R,3R)-2,3-dihydroxy-3-methylpentanoate (2,3-dihydroxy-3-methylvalerate) into 2-oxo-3-methylpentanoate (2-oxo-3-methylvalerate) and of (2R)-2,3-dihydroxy-3-methylbutanoate (2,3-dihydroxyisovalerate) into 2-oxo-3-methylbutanoate (2-oxoisovalerate), the penultimate precursor to L-isoleucine and L-valine, respectively.</text>
</comment>
<comment type="catalytic activity">
    <reaction evidence="1">
        <text>(2R)-2,3-dihydroxy-3-methylbutanoate = 3-methyl-2-oxobutanoate + H2O</text>
        <dbReference type="Rhea" id="RHEA:24809"/>
        <dbReference type="ChEBI" id="CHEBI:11851"/>
        <dbReference type="ChEBI" id="CHEBI:15377"/>
        <dbReference type="ChEBI" id="CHEBI:49072"/>
        <dbReference type="EC" id="4.2.1.9"/>
    </reaction>
    <physiologicalReaction direction="left-to-right" evidence="1">
        <dbReference type="Rhea" id="RHEA:24810"/>
    </physiologicalReaction>
</comment>
<comment type="catalytic activity">
    <reaction evidence="1">
        <text>(2R,3R)-2,3-dihydroxy-3-methylpentanoate = (S)-3-methyl-2-oxopentanoate + H2O</text>
        <dbReference type="Rhea" id="RHEA:27694"/>
        <dbReference type="ChEBI" id="CHEBI:15377"/>
        <dbReference type="ChEBI" id="CHEBI:35146"/>
        <dbReference type="ChEBI" id="CHEBI:49258"/>
        <dbReference type="EC" id="4.2.1.9"/>
    </reaction>
    <physiologicalReaction direction="left-to-right" evidence="1">
        <dbReference type="Rhea" id="RHEA:27695"/>
    </physiologicalReaction>
</comment>
<comment type="cofactor">
    <cofactor evidence="1">
        <name>[2Fe-2S] cluster</name>
        <dbReference type="ChEBI" id="CHEBI:190135"/>
    </cofactor>
    <text evidence="1">Binds 1 [2Fe-2S] cluster per subunit. This cluster acts as a Lewis acid cofactor.</text>
</comment>
<comment type="cofactor">
    <cofactor evidence="1">
        <name>Mg(2+)</name>
        <dbReference type="ChEBI" id="CHEBI:18420"/>
    </cofactor>
</comment>
<comment type="pathway">
    <text evidence="1">Amino-acid biosynthesis; L-isoleucine biosynthesis; L-isoleucine from 2-oxobutanoate: step 3/4.</text>
</comment>
<comment type="pathway">
    <text evidence="1">Amino-acid biosynthesis; L-valine biosynthesis; L-valine from pyruvate: step 3/4.</text>
</comment>
<comment type="subunit">
    <text evidence="1">Homodimer.</text>
</comment>
<comment type="similarity">
    <text evidence="1">Belongs to the IlvD/Edd family.</text>
</comment>